<proteinExistence type="evidence at protein level"/>
<comment type="function">
    <text>Has an ATP-independent isopeptidase activity, cleaving at the C-terminus of the ubiquitin moiety in natural or engineered linear fusion proteins, irrespective of their size or the presence of an N-terminal extension to ubiquitin.</text>
</comment>
<comment type="catalytic activity">
    <reaction>
        <text>Thiol-dependent hydrolysis of ester, thioester, amide, peptide and isopeptide bonds formed by the C-terminal Gly of ubiquitin (a 76-residue protein attached to proteins as an intracellular targeting signal).</text>
        <dbReference type="EC" id="3.4.19.12"/>
    </reaction>
</comment>
<comment type="miscellaneous">
    <text evidence="4">Present with 8970 molecules/cell in log phase SD medium.</text>
</comment>
<comment type="similarity">
    <text evidence="5">Belongs to the peptidase C19 family.</text>
</comment>
<dbReference type="EC" id="3.4.19.12"/>
<dbReference type="EMBL" id="M63484">
    <property type="protein sequence ID" value="AAA35189.1"/>
    <property type="molecule type" value="Genomic_DNA"/>
</dbReference>
<dbReference type="EMBL" id="Z74170">
    <property type="protein sequence ID" value="CAA98690.1"/>
    <property type="molecule type" value="Genomic_DNA"/>
</dbReference>
<dbReference type="EMBL" id="BK006938">
    <property type="protein sequence ID" value="DAA11738.1"/>
    <property type="molecule type" value="Genomic_DNA"/>
</dbReference>
<dbReference type="PIR" id="S67665">
    <property type="entry name" value="S67665"/>
</dbReference>
<dbReference type="RefSeq" id="NP_010161.1">
    <property type="nucleotide sequence ID" value="NM_001180181.1"/>
</dbReference>
<dbReference type="BioGRID" id="31941">
    <property type="interactions" value="261"/>
</dbReference>
<dbReference type="FunCoup" id="P25037">
    <property type="interactions" value="81"/>
</dbReference>
<dbReference type="IntAct" id="P25037">
    <property type="interactions" value="76"/>
</dbReference>
<dbReference type="MINT" id="P25037"/>
<dbReference type="STRING" id="4932.YDL122W"/>
<dbReference type="MEROPS" id="C19.002"/>
<dbReference type="iPTMnet" id="P25037"/>
<dbReference type="PaxDb" id="4932-YDL122W"/>
<dbReference type="PeptideAtlas" id="P25037"/>
<dbReference type="EnsemblFungi" id="YDL122W_mRNA">
    <property type="protein sequence ID" value="YDL122W"/>
    <property type="gene ID" value="YDL122W"/>
</dbReference>
<dbReference type="GeneID" id="851435"/>
<dbReference type="KEGG" id="sce:YDL122W"/>
<dbReference type="AGR" id="SGD:S000002280"/>
<dbReference type="SGD" id="S000002280">
    <property type="gene designation" value="UBP1"/>
</dbReference>
<dbReference type="VEuPathDB" id="FungiDB:YDL122W"/>
<dbReference type="eggNOG" id="KOG1867">
    <property type="taxonomic scope" value="Eukaryota"/>
</dbReference>
<dbReference type="GeneTree" id="ENSGT00940000176220"/>
<dbReference type="HOGENOM" id="CLU_008279_6_1_1"/>
<dbReference type="InParanoid" id="P25037"/>
<dbReference type="OMA" id="VECNRCA"/>
<dbReference type="OrthoDB" id="2020758at2759"/>
<dbReference type="BioCyc" id="YEAST:G3O-29521-MONOMER"/>
<dbReference type="BioGRID-ORCS" id="851435">
    <property type="hits" value="2 hits in 10 CRISPR screens"/>
</dbReference>
<dbReference type="PRO" id="PR:P25037"/>
<dbReference type="Proteomes" id="UP000002311">
    <property type="component" value="Chromosome IV"/>
</dbReference>
<dbReference type="RNAct" id="P25037">
    <property type="molecule type" value="protein"/>
</dbReference>
<dbReference type="GO" id="GO:0005737">
    <property type="term" value="C:cytoplasm"/>
    <property type="evidence" value="ECO:0000314"/>
    <property type="project" value="SGD"/>
</dbReference>
<dbReference type="GO" id="GO:0005829">
    <property type="term" value="C:cytosol"/>
    <property type="evidence" value="ECO:0000318"/>
    <property type="project" value="GO_Central"/>
</dbReference>
<dbReference type="GO" id="GO:0005783">
    <property type="term" value="C:endoplasmic reticulum"/>
    <property type="evidence" value="ECO:0000314"/>
    <property type="project" value="SGD"/>
</dbReference>
<dbReference type="GO" id="GO:0005789">
    <property type="term" value="C:endoplasmic reticulum membrane"/>
    <property type="evidence" value="ECO:0000314"/>
    <property type="project" value="SGD"/>
</dbReference>
<dbReference type="GO" id="GO:0005634">
    <property type="term" value="C:nucleus"/>
    <property type="evidence" value="ECO:0000318"/>
    <property type="project" value="GO_Central"/>
</dbReference>
<dbReference type="GO" id="GO:0004843">
    <property type="term" value="F:cysteine-type deubiquitinase activity"/>
    <property type="evidence" value="ECO:0000314"/>
    <property type="project" value="SGD"/>
</dbReference>
<dbReference type="GO" id="GO:0016579">
    <property type="term" value="P:protein deubiquitination"/>
    <property type="evidence" value="ECO:0000314"/>
    <property type="project" value="SGD"/>
</dbReference>
<dbReference type="GO" id="GO:0006508">
    <property type="term" value="P:proteolysis"/>
    <property type="evidence" value="ECO:0007669"/>
    <property type="project" value="UniProtKB-KW"/>
</dbReference>
<dbReference type="GO" id="GO:0031647">
    <property type="term" value="P:regulation of protein stability"/>
    <property type="evidence" value="ECO:0000318"/>
    <property type="project" value="GO_Central"/>
</dbReference>
<dbReference type="CDD" id="cd02662">
    <property type="entry name" value="Peptidase_C19F"/>
    <property type="match status" value="1"/>
</dbReference>
<dbReference type="Gene3D" id="3.90.70.10">
    <property type="entry name" value="Cysteine proteinases"/>
    <property type="match status" value="1"/>
</dbReference>
<dbReference type="InterPro" id="IPR038765">
    <property type="entry name" value="Papain-like_cys_pep_sf"/>
</dbReference>
<dbReference type="InterPro" id="IPR050164">
    <property type="entry name" value="Peptidase_C19"/>
</dbReference>
<dbReference type="InterPro" id="IPR001394">
    <property type="entry name" value="Peptidase_C19_UCH"/>
</dbReference>
<dbReference type="InterPro" id="IPR018200">
    <property type="entry name" value="USP_CS"/>
</dbReference>
<dbReference type="InterPro" id="IPR028889">
    <property type="entry name" value="USP_dom"/>
</dbReference>
<dbReference type="PANTHER" id="PTHR24006">
    <property type="entry name" value="UBIQUITIN CARBOXYL-TERMINAL HYDROLASE"/>
    <property type="match status" value="1"/>
</dbReference>
<dbReference type="PANTHER" id="PTHR24006:SF888">
    <property type="entry name" value="UBIQUITIN CARBOXYL-TERMINAL HYDROLASE 30"/>
    <property type="match status" value="1"/>
</dbReference>
<dbReference type="Pfam" id="PF00443">
    <property type="entry name" value="UCH"/>
    <property type="match status" value="1"/>
</dbReference>
<dbReference type="SUPFAM" id="SSF54001">
    <property type="entry name" value="Cysteine proteinases"/>
    <property type="match status" value="1"/>
</dbReference>
<dbReference type="PROSITE" id="PS00972">
    <property type="entry name" value="USP_1"/>
    <property type="match status" value="1"/>
</dbReference>
<dbReference type="PROSITE" id="PS00973">
    <property type="entry name" value="USP_2"/>
    <property type="match status" value="1"/>
</dbReference>
<dbReference type="PROSITE" id="PS50235">
    <property type="entry name" value="USP_3"/>
    <property type="match status" value="1"/>
</dbReference>
<accession>P25037</accession>
<accession>D6VRM8</accession>
<accession>Q07543</accession>
<sequence>MDLFIESKINSLLQFLFGSRQDFLRNFKTWSNNNNNLSIYLLIFGIVVFFYKKPDHLNYIVESVSEMTTNFRNNNSLSRWLPRSKFTHLDEEILKRGGFIAGLVNDGNTCFMNSVLQSLASSRELMEFLDNNVIRTYEEIEQNEHNEEGNGQESAQDEATHKKNTRKGGKVYGKHKKKLNRKSSSKEDEEKSQEPDITFSVALRDLLSALNAKYYRDKPYFKTNSLLKAMSKSPRKNILLGYDQEDAQEFFQNILAELESNVKSLNTEKLDTTPVAKSELPDDALVGQLNLGEVGTVYIPTEQIDPNSILHDKSIQNFTPFKLMTPLDGITAERIGCLQCGENGGIRYSVFSGLSLNLPNENIGSTLKLSQLLSDWSKPEIIEGVECNRCALTAAHSHLFGQLKEFEKKPEGSIPEKLINAVKDRVHQIEEVLAKPVIDDEDYKKLHTANMVRKCSKSKQILISRPPPLLSIHINRSVFDPRTYMIRKNNSKVLFKSRLNLAPWCCDINEINLDARLPMSKKEKAAQQDSSEDENIGGEYYTKLHERFEQEFEDSEEEKEYDDAEGNYASHYNHTKDISNYDPLNGEVDGVTSDDEDEYIEETDALGNTIKKRIIEHSDVENENVKDNEELQEIDNVSLDEPKINVEDQLETSSDEEDVIPAPPINYARSFSTVPATPLTYSLRSVIVHYGTHNYGHYIAFRKYRGCWWRISDETVYVVDEAEVLSTPGVFMLFYEYDFDEETGKMKDDLEAIQSNNEEDDEKEQEQKGVQEPKESQEQGEGEEQEEGQEQMKFERTEDHRDISGKDVN</sequence>
<feature type="chain" id="PRO_0000080585" description="Ubiquitin carboxyl-terminal hydrolase 1">
    <location>
        <begin position="1"/>
        <end position="809"/>
    </location>
</feature>
<feature type="domain" description="USP">
    <location>
        <begin position="101"/>
        <end position="738"/>
    </location>
</feature>
<feature type="region of interest" description="Disordered" evidence="3">
    <location>
        <begin position="143"/>
        <end position="195"/>
    </location>
</feature>
<feature type="region of interest" description="Disordered" evidence="3">
    <location>
        <begin position="569"/>
        <end position="596"/>
    </location>
</feature>
<feature type="region of interest" description="Disordered" evidence="3">
    <location>
        <begin position="750"/>
        <end position="809"/>
    </location>
</feature>
<feature type="compositionally biased region" description="Basic residues" evidence="3">
    <location>
        <begin position="162"/>
        <end position="183"/>
    </location>
</feature>
<feature type="compositionally biased region" description="Basic and acidic residues" evidence="3">
    <location>
        <begin position="184"/>
        <end position="194"/>
    </location>
</feature>
<feature type="compositionally biased region" description="Basic and acidic residues" evidence="3">
    <location>
        <begin position="765"/>
        <end position="777"/>
    </location>
</feature>
<feature type="compositionally biased region" description="Acidic residues" evidence="3">
    <location>
        <begin position="778"/>
        <end position="789"/>
    </location>
</feature>
<feature type="compositionally biased region" description="Basic and acidic residues" evidence="3">
    <location>
        <begin position="790"/>
        <end position="809"/>
    </location>
</feature>
<feature type="active site" description="Nucleophile" evidence="1 2">
    <location>
        <position position="110"/>
    </location>
</feature>
<feature type="active site" description="Proton acceptor" evidence="1 2">
    <location>
        <position position="697"/>
    </location>
</feature>
<feature type="modified residue" description="Phosphoserine" evidence="6 7 8">
    <location>
        <position position="530"/>
    </location>
</feature>
<feature type="modified residue" description="Phosphoserine" evidence="6 7 8">
    <location>
        <position position="531"/>
    </location>
</feature>
<feature type="modified residue" description="Phosphoserine" evidence="6 8">
    <location>
        <position position="555"/>
    </location>
</feature>
<feature type="modified residue" description="Phosphoserine" evidence="6 7 8">
    <location>
        <position position="618"/>
    </location>
</feature>
<feature type="modified residue" description="Phosphoserine" evidence="6 7 8">
    <location>
        <position position="638"/>
    </location>
</feature>
<feature type="modified residue" description="Phosphothreonine" evidence="8">
    <location>
        <position position="652"/>
    </location>
</feature>
<feature type="modified residue" description="Phosphoserine" evidence="8">
    <location>
        <position position="653"/>
    </location>
</feature>
<feature type="modified residue" description="Phosphoserine" evidence="8">
    <location>
        <position position="654"/>
    </location>
</feature>
<feature type="modified residue" description="Phosphoserine" evidence="6">
    <location>
        <position position="670"/>
    </location>
</feature>
<feature type="modified residue" description="Phosphoserine" evidence="6 7 8">
    <location>
        <position position="755"/>
    </location>
</feature>
<feature type="sequence conflict" description="In Ref. 1; AAA35189." evidence="5" ref="1">
    <original>L</original>
    <variation>P</variation>
    <location>
        <position position="418"/>
    </location>
</feature>
<organism>
    <name type="scientific">Saccharomyces cerevisiae (strain ATCC 204508 / S288c)</name>
    <name type="common">Baker's yeast</name>
    <dbReference type="NCBI Taxonomy" id="559292"/>
    <lineage>
        <taxon>Eukaryota</taxon>
        <taxon>Fungi</taxon>
        <taxon>Dikarya</taxon>
        <taxon>Ascomycota</taxon>
        <taxon>Saccharomycotina</taxon>
        <taxon>Saccharomycetes</taxon>
        <taxon>Saccharomycetales</taxon>
        <taxon>Saccharomycetaceae</taxon>
        <taxon>Saccharomyces</taxon>
    </lineage>
</organism>
<gene>
    <name type="primary">UBP1</name>
    <name type="ordered locus">YDL122W</name>
    <name type="ORF">D2250</name>
</gene>
<protein>
    <recommendedName>
        <fullName>Ubiquitin carboxyl-terminal hydrolase 1</fullName>
        <ecNumber>3.4.19.12</ecNumber>
    </recommendedName>
    <alternativeName>
        <fullName>Deubiquitinating enzyme 1</fullName>
    </alternativeName>
    <alternativeName>
        <fullName>Ubiquitin thioesterase 1</fullName>
    </alternativeName>
    <alternativeName>
        <fullName>Ubiquitin-specific-processing protease 1</fullName>
    </alternativeName>
</protein>
<reference key="1">
    <citation type="journal article" date="1991" name="J. Biol. Chem.">
        <title>Cloning and functional analysis of the ubiquitin-specific protease gene UBP1 of Saccharomyces cerevisiae.</title>
        <authorList>
            <person name="Tobias J.W."/>
            <person name="Varshavsky A."/>
        </authorList>
    </citation>
    <scope>NUCLEOTIDE SEQUENCE [GENOMIC DNA]</scope>
</reference>
<reference key="2">
    <citation type="journal article" date="1997" name="Nature">
        <title>The nucleotide sequence of Saccharomyces cerevisiae chromosome IV.</title>
        <authorList>
            <person name="Jacq C."/>
            <person name="Alt-Moerbe J."/>
            <person name="Andre B."/>
            <person name="Arnold W."/>
            <person name="Bahr A."/>
            <person name="Ballesta J.P.G."/>
            <person name="Bargues M."/>
            <person name="Baron L."/>
            <person name="Becker A."/>
            <person name="Biteau N."/>
            <person name="Bloecker H."/>
            <person name="Blugeon C."/>
            <person name="Boskovic J."/>
            <person name="Brandt P."/>
            <person name="Brueckner M."/>
            <person name="Buitrago M.J."/>
            <person name="Coster F."/>
            <person name="Delaveau T."/>
            <person name="del Rey F."/>
            <person name="Dujon B."/>
            <person name="Eide L.G."/>
            <person name="Garcia-Cantalejo J.M."/>
            <person name="Goffeau A."/>
            <person name="Gomez-Peris A."/>
            <person name="Granotier C."/>
            <person name="Hanemann V."/>
            <person name="Hankeln T."/>
            <person name="Hoheisel J.D."/>
            <person name="Jaeger W."/>
            <person name="Jimenez A."/>
            <person name="Jonniaux J.-L."/>
            <person name="Kraemer C."/>
            <person name="Kuester H."/>
            <person name="Laamanen P."/>
            <person name="Legros Y."/>
            <person name="Louis E.J."/>
            <person name="Moeller-Rieker S."/>
            <person name="Monnet A."/>
            <person name="Moro M."/>
            <person name="Mueller-Auer S."/>
            <person name="Nussbaumer B."/>
            <person name="Paricio N."/>
            <person name="Paulin L."/>
            <person name="Perea J."/>
            <person name="Perez-Alonso M."/>
            <person name="Perez-Ortin J.E."/>
            <person name="Pohl T.M."/>
            <person name="Prydz H."/>
            <person name="Purnelle B."/>
            <person name="Rasmussen S.W."/>
            <person name="Remacha M.A."/>
            <person name="Revuelta J.L."/>
            <person name="Rieger M."/>
            <person name="Salom D."/>
            <person name="Saluz H.P."/>
            <person name="Saiz J.E."/>
            <person name="Saren A.-M."/>
            <person name="Schaefer M."/>
            <person name="Scharfe M."/>
            <person name="Schmidt E.R."/>
            <person name="Schneider C."/>
            <person name="Scholler P."/>
            <person name="Schwarz S."/>
            <person name="Soler-Mira A."/>
            <person name="Urrestarazu L.A."/>
            <person name="Verhasselt P."/>
            <person name="Vissers S."/>
            <person name="Voet M."/>
            <person name="Volckaert G."/>
            <person name="Wagner G."/>
            <person name="Wambutt R."/>
            <person name="Wedler E."/>
            <person name="Wedler H."/>
            <person name="Woelfl S."/>
            <person name="Harris D.E."/>
            <person name="Bowman S."/>
            <person name="Brown D."/>
            <person name="Churcher C.M."/>
            <person name="Connor R."/>
            <person name="Dedman K."/>
            <person name="Gentles S."/>
            <person name="Hamlin N."/>
            <person name="Hunt S."/>
            <person name="Jones L."/>
            <person name="McDonald S."/>
            <person name="Murphy L.D."/>
            <person name="Niblett D."/>
            <person name="Odell C."/>
            <person name="Oliver K."/>
            <person name="Rajandream M.A."/>
            <person name="Richards C."/>
            <person name="Shore L."/>
            <person name="Walsh S.V."/>
            <person name="Barrell B.G."/>
            <person name="Dietrich F.S."/>
            <person name="Mulligan J.T."/>
            <person name="Allen E."/>
            <person name="Araujo R."/>
            <person name="Aviles E."/>
            <person name="Berno A."/>
            <person name="Carpenter J."/>
            <person name="Chen E."/>
            <person name="Cherry J.M."/>
            <person name="Chung E."/>
            <person name="Duncan M."/>
            <person name="Hunicke-Smith S."/>
            <person name="Hyman R.W."/>
            <person name="Komp C."/>
            <person name="Lashkari D."/>
            <person name="Lew H."/>
            <person name="Lin D."/>
            <person name="Mosedale D."/>
            <person name="Nakahara K."/>
            <person name="Namath A."/>
            <person name="Oefner P."/>
            <person name="Oh C."/>
            <person name="Petel F.X."/>
            <person name="Roberts D."/>
            <person name="Schramm S."/>
            <person name="Schroeder M."/>
            <person name="Shogren T."/>
            <person name="Shroff N."/>
            <person name="Winant A."/>
            <person name="Yelton M.A."/>
            <person name="Botstein D."/>
            <person name="Davis R.W."/>
            <person name="Johnston M."/>
            <person name="Andrews S."/>
            <person name="Brinkman R."/>
            <person name="Cooper J."/>
            <person name="Ding H."/>
            <person name="Du Z."/>
            <person name="Favello A."/>
            <person name="Fulton L."/>
            <person name="Gattung S."/>
            <person name="Greco T."/>
            <person name="Hallsworth K."/>
            <person name="Hawkins J."/>
            <person name="Hillier L.W."/>
            <person name="Jier M."/>
            <person name="Johnson D."/>
            <person name="Johnston L."/>
            <person name="Kirsten J."/>
            <person name="Kucaba T."/>
            <person name="Langston Y."/>
            <person name="Latreille P."/>
            <person name="Le T."/>
            <person name="Mardis E."/>
            <person name="Menezes S."/>
            <person name="Miller N."/>
            <person name="Nhan M."/>
            <person name="Pauley A."/>
            <person name="Peluso D."/>
            <person name="Rifkin L."/>
            <person name="Riles L."/>
            <person name="Taich A."/>
            <person name="Trevaskis E."/>
            <person name="Vignati D."/>
            <person name="Wilcox L."/>
            <person name="Wohldman P."/>
            <person name="Vaudin M."/>
            <person name="Wilson R."/>
            <person name="Waterston R."/>
            <person name="Albermann K."/>
            <person name="Hani J."/>
            <person name="Heumann K."/>
            <person name="Kleine K."/>
            <person name="Mewes H.-W."/>
            <person name="Zollner A."/>
            <person name="Zaccaria P."/>
        </authorList>
    </citation>
    <scope>NUCLEOTIDE SEQUENCE [LARGE SCALE GENOMIC DNA]</scope>
    <source>
        <strain>ATCC 204508 / S288c</strain>
    </source>
</reference>
<reference key="3">
    <citation type="journal article" date="2014" name="G3 (Bethesda)">
        <title>The reference genome sequence of Saccharomyces cerevisiae: Then and now.</title>
        <authorList>
            <person name="Engel S.R."/>
            <person name="Dietrich F.S."/>
            <person name="Fisk D.G."/>
            <person name="Binkley G."/>
            <person name="Balakrishnan R."/>
            <person name="Costanzo M.C."/>
            <person name="Dwight S.S."/>
            <person name="Hitz B.C."/>
            <person name="Karra K."/>
            <person name="Nash R.S."/>
            <person name="Weng S."/>
            <person name="Wong E.D."/>
            <person name="Lloyd P."/>
            <person name="Skrzypek M.S."/>
            <person name="Miyasato S.R."/>
            <person name="Simison M."/>
            <person name="Cherry J.M."/>
        </authorList>
    </citation>
    <scope>GENOME REANNOTATION</scope>
    <source>
        <strain>ATCC 204508 / S288c</strain>
    </source>
</reference>
<reference key="4">
    <citation type="journal article" date="2003" name="Nature">
        <title>Global analysis of protein expression in yeast.</title>
        <authorList>
            <person name="Ghaemmaghami S."/>
            <person name="Huh W.-K."/>
            <person name="Bower K."/>
            <person name="Howson R.W."/>
            <person name="Belle A."/>
            <person name="Dephoure N."/>
            <person name="O'Shea E.K."/>
            <person name="Weissman J.S."/>
        </authorList>
    </citation>
    <scope>LEVEL OF PROTEIN EXPRESSION [LARGE SCALE ANALYSIS]</scope>
</reference>
<reference key="5">
    <citation type="journal article" date="2007" name="J. Proteome Res.">
        <title>Large-scale phosphorylation analysis of alpha-factor-arrested Saccharomyces cerevisiae.</title>
        <authorList>
            <person name="Li X."/>
            <person name="Gerber S.A."/>
            <person name="Rudner A.D."/>
            <person name="Beausoleil S.A."/>
            <person name="Haas W."/>
            <person name="Villen J."/>
            <person name="Elias J.E."/>
            <person name="Gygi S.P."/>
        </authorList>
    </citation>
    <scope>PHOSPHORYLATION [LARGE SCALE ANALYSIS] AT SER-530; SER-531; SER-555; SER-618; SER-638; SER-670 AND SER-755</scope>
    <scope>IDENTIFICATION BY MASS SPECTROMETRY [LARGE SCALE ANALYSIS]</scope>
    <source>
        <strain>ADR376</strain>
    </source>
</reference>
<reference key="6">
    <citation type="journal article" date="2007" name="Proc. Natl. Acad. Sci. U.S.A.">
        <title>Analysis of phosphorylation sites on proteins from Saccharomyces cerevisiae by electron transfer dissociation (ETD) mass spectrometry.</title>
        <authorList>
            <person name="Chi A."/>
            <person name="Huttenhower C."/>
            <person name="Geer L.Y."/>
            <person name="Coon J.J."/>
            <person name="Syka J.E.P."/>
            <person name="Bai D.L."/>
            <person name="Shabanowitz J."/>
            <person name="Burke D.J."/>
            <person name="Troyanskaya O.G."/>
            <person name="Hunt D.F."/>
        </authorList>
    </citation>
    <scope>IDENTIFICATION BY MASS SPECTROMETRY [LARGE SCALE ANALYSIS]</scope>
</reference>
<reference key="7">
    <citation type="journal article" date="2008" name="Mol. Cell. Proteomics">
        <title>A multidimensional chromatography technology for in-depth phosphoproteome analysis.</title>
        <authorList>
            <person name="Albuquerque C.P."/>
            <person name="Smolka M.B."/>
            <person name="Payne S.H."/>
            <person name="Bafna V."/>
            <person name="Eng J."/>
            <person name="Zhou H."/>
        </authorList>
    </citation>
    <scope>PHOSPHORYLATION [LARGE SCALE ANALYSIS] AT SER-530; SER-531; SER-618; SER-638 AND SER-755</scope>
    <scope>IDENTIFICATION BY MASS SPECTROMETRY [LARGE SCALE ANALYSIS]</scope>
</reference>
<reference key="8">
    <citation type="journal article" date="2009" name="Science">
        <title>Global analysis of Cdk1 substrate phosphorylation sites provides insights into evolution.</title>
        <authorList>
            <person name="Holt L.J."/>
            <person name="Tuch B.B."/>
            <person name="Villen J."/>
            <person name="Johnson A.D."/>
            <person name="Gygi S.P."/>
            <person name="Morgan D.O."/>
        </authorList>
    </citation>
    <scope>PHOSPHORYLATION [LARGE SCALE ANALYSIS] AT SER-530; SER-531; SER-555; SER-618; SER-638; THR-652; SER-653; SER-654 AND SER-755</scope>
    <scope>IDENTIFICATION BY MASS SPECTROMETRY [LARGE SCALE ANALYSIS]</scope>
</reference>
<keyword id="KW-0378">Hydrolase</keyword>
<keyword id="KW-0597">Phosphoprotein</keyword>
<keyword id="KW-0645">Protease</keyword>
<keyword id="KW-1185">Reference proteome</keyword>
<keyword id="KW-0788">Thiol protease</keyword>
<keyword id="KW-0833">Ubl conjugation pathway</keyword>
<name>UBP1_YEAST</name>
<evidence type="ECO:0000255" key="1">
    <source>
        <dbReference type="PROSITE-ProRule" id="PRU10092"/>
    </source>
</evidence>
<evidence type="ECO:0000255" key="2">
    <source>
        <dbReference type="PROSITE-ProRule" id="PRU10093"/>
    </source>
</evidence>
<evidence type="ECO:0000256" key="3">
    <source>
        <dbReference type="SAM" id="MobiDB-lite"/>
    </source>
</evidence>
<evidence type="ECO:0000269" key="4">
    <source>
    </source>
</evidence>
<evidence type="ECO:0000305" key="5"/>
<evidence type="ECO:0007744" key="6">
    <source>
    </source>
</evidence>
<evidence type="ECO:0007744" key="7">
    <source>
    </source>
</evidence>
<evidence type="ECO:0007744" key="8">
    <source>
    </source>
</evidence>